<feature type="chain" id="PRO_1000002976" description="Phospho-N-acetylmuramoyl-pentapeptide-transferase">
    <location>
        <begin position="1"/>
        <end position="365"/>
    </location>
</feature>
<feature type="transmembrane region" description="Helical" evidence="1">
    <location>
        <begin position="22"/>
        <end position="42"/>
    </location>
</feature>
<feature type="transmembrane region" description="Helical" evidence="1">
    <location>
        <begin position="74"/>
        <end position="94"/>
    </location>
</feature>
<feature type="transmembrane region" description="Helical" evidence="1">
    <location>
        <begin position="95"/>
        <end position="115"/>
    </location>
</feature>
<feature type="transmembrane region" description="Helical" evidence="1">
    <location>
        <begin position="133"/>
        <end position="153"/>
    </location>
</feature>
<feature type="transmembrane region" description="Helical" evidence="1">
    <location>
        <begin position="168"/>
        <end position="188"/>
    </location>
</feature>
<feature type="transmembrane region" description="Helical" evidence="1">
    <location>
        <begin position="201"/>
        <end position="221"/>
    </location>
</feature>
<feature type="transmembrane region" description="Helical" evidence="1">
    <location>
        <begin position="240"/>
        <end position="260"/>
    </location>
</feature>
<feature type="transmembrane region" description="Helical" evidence="1">
    <location>
        <begin position="267"/>
        <end position="287"/>
    </location>
</feature>
<feature type="transmembrane region" description="Helical" evidence="1">
    <location>
        <begin position="292"/>
        <end position="312"/>
    </location>
</feature>
<feature type="transmembrane region" description="Helical" evidence="1">
    <location>
        <begin position="342"/>
        <end position="362"/>
    </location>
</feature>
<reference key="1">
    <citation type="journal article" date="2007" name="PLoS ONE">
        <title>Genome sequencing shows that European isolates of Francisella tularensis subspecies tularensis are almost identical to US laboratory strain Schu S4.</title>
        <authorList>
            <person name="Chaudhuri R.R."/>
            <person name="Ren C.-P."/>
            <person name="Desmond L."/>
            <person name="Vincent G.A."/>
            <person name="Silman N.J."/>
            <person name="Brehm J.K."/>
            <person name="Elmore M.J."/>
            <person name="Hudson M.J."/>
            <person name="Forsman M."/>
            <person name="Isherwood K.E."/>
            <person name="Gurycova D."/>
            <person name="Minton N.P."/>
            <person name="Titball R.W."/>
            <person name="Pallen M.J."/>
            <person name="Vipond R."/>
        </authorList>
    </citation>
    <scope>NUCLEOTIDE SEQUENCE [LARGE SCALE GENOMIC DNA]</scope>
    <source>
        <strain>FSC 198</strain>
    </source>
</reference>
<accession>Q14J06</accession>
<name>MRAY_FRAT1</name>
<protein>
    <recommendedName>
        <fullName evidence="1">Phospho-N-acetylmuramoyl-pentapeptide-transferase</fullName>
        <ecNumber evidence="1">2.7.8.13</ecNumber>
    </recommendedName>
    <alternativeName>
        <fullName evidence="1">UDP-MurNAc-pentapeptide phosphotransferase</fullName>
    </alternativeName>
</protein>
<evidence type="ECO:0000255" key="1">
    <source>
        <dbReference type="HAMAP-Rule" id="MF_00038"/>
    </source>
</evidence>
<gene>
    <name evidence="1" type="primary">mraY</name>
    <name type="ordered locus">FTF0450</name>
</gene>
<dbReference type="EC" id="2.7.8.13" evidence="1"/>
<dbReference type="EMBL" id="AM286280">
    <property type="protein sequence ID" value="CAL08466.1"/>
    <property type="molecule type" value="Genomic_DNA"/>
</dbReference>
<dbReference type="RefSeq" id="WP_003020217.1">
    <property type="nucleotide sequence ID" value="NC_008245.1"/>
</dbReference>
<dbReference type="SMR" id="Q14J06"/>
<dbReference type="KEGG" id="ftf:FTF0450"/>
<dbReference type="HOGENOM" id="CLU_023982_0_0_6"/>
<dbReference type="UniPathway" id="UPA00219"/>
<dbReference type="GO" id="GO:0005886">
    <property type="term" value="C:plasma membrane"/>
    <property type="evidence" value="ECO:0007669"/>
    <property type="project" value="UniProtKB-SubCell"/>
</dbReference>
<dbReference type="GO" id="GO:0046872">
    <property type="term" value="F:metal ion binding"/>
    <property type="evidence" value="ECO:0007669"/>
    <property type="project" value="UniProtKB-KW"/>
</dbReference>
<dbReference type="GO" id="GO:0008963">
    <property type="term" value="F:phospho-N-acetylmuramoyl-pentapeptide-transferase activity"/>
    <property type="evidence" value="ECO:0007669"/>
    <property type="project" value="UniProtKB-UniRule"/>
</dbReference>
<dbReference type="GO" id="GO:0051992">
    <property type="term" value="F:UDP-N-acetylmuramoyl-L-alanyl-D-glutamyl-meso-2,6-diaminopimelyl-D-alanyl-D-alanine:undecaprenyl-phosphate transferase activity"/>
    <property type="evidence" value="ECO:0007669"/>
    <property type="project" value="RHEA"/>
</dbReference>
<dbReference type="GO" id="GO:0051301">
    <property type="term" value="P:cell division"/>
    <property type="evidence" value="ECO:0007669"/>
    <property type="project" value="UniProtKB-KW"/>
</dbReference>
<dbReference type="GO" id="GO:0071555">
    <property type="term" value="P:cell wall organization"/>
    <property type="evidence" value="ECO:0007669"/>
    <property type="project" value="UniProtKB-KW"/>
</dbReference>
<dbReference type="GO" id="GO:0009252">
    <property type="term" value="P:peptidoglycan biosynthetic process"/>
    <property type="evidence" value="ECO:0007669"/>
    <property type="project" value="UniProtKB-UniRule"/>
</dbReference>
<dbReference type="GO" id="GO:0008360">
    <property type="term" value="P:regulation of cell shape"/>
    <property type="evidence" value="ECO:0007669"/>
    <property type="project" value="UniProtKB-KW"/>
</dbReference>
<dbReference type="CDD" id="cd06852">
    <property type="entry name" value="GT_MraY"/>
    <property type="match status" value="1"/>
</dbReference>
<dbReference type="HAMAP" id="MF_00038">
    <property type="entry name" value="MraY"/>
    <property type="match status" value="1"/>
</dbReference>
<dbReference type="InterPro" id="IPR000715">
    <property type="entry name" value="Glycosyl_transferase_4"/>
</dbReference>
<dbReference type="InterPro" id="IPR003524">
    <property type="entry name" value="PNAcMuramoyl-5peptid_Trfase"/>
</dbReference>
<dbReference type="InterPro" id="IPR018480">
    <property type="entry name" value="PNAcMuramoyl-5peptid_Trfase_CS"/>
</dbReference>
<dbReference type="NCBIfam" id="TIGR00445">
    <property type="entry name" value="mraY"/>
    <property type="match status" value="1"/>
</dbReference>
<dbReference type="PANTHER" id="PTHR22926">
    <property type="entry name" value="PHOSPHO-N-ACETYLMURAMOYL-PENTAPEPTIDE-TRANSFERASE"/>
    <property type="match status" value="1"/>
</dbReference>
<dbReference type="PANTHER" id="PTHR22926:SF5">
    <property type="entry name" value="PHOSPHO-N-ACETYLMURAMOYL-PENTAPEPTIDE-TRANSFERASE HOMOLOG"/>
    <property type="match status" value="1"/>
</dbReference>
<dbReference type="Pfam" id="PF00953">
    <property type="entry name" value="Glycos_transf_4"/>
    <property type="match status" value="1"/>
</dbReference>
<dbReference type="Pfam" id="PF10555">
    <property type="entry name" value="MraY_sig1"/>
    <property type="match status" value="1"/>
</dbReference>
<dbReference type="PROSITE" id="PS01347">
    <property type="entry name" value="MRAY_1"/>
    <property type="match status" value="1"/>
</dbReference>
<dbReference type="PROSITE" id="PS01348">
    <property type="entry name" value="MRAY_2"/>
    <property type="match status" value="1"/>
</dbReference>
<sequence>MLIYLFEWLSHYFKGLEVFSSYISVRIIMISITSLLITLALGRPMISWLQKMQIGQIVRDDGPQSHFSKRNTPTMGGVLILSSVIISCLLWGDLTSIYLWILILVVIFFGAIGFFDDYLKLVLKHPKGLRAKYKFALQSIFSIVLAIVLFYLLSKNGQMSLSIPFSKSLYIPIGIVIFVVLAFFIINGSSNAVNLTDGLDGLAIVPVVLVAAGLGIYAYIETNSTLANYLLFNYLGNPGLAEVAVFCAAVCGSGLAFLWFNSHPAEVFMGDVGSLTLGAVLGVIAVMVRQELIFFIMGLLFVVEALSVMLQVGSYKLRNGKRIFRMAPIHHHFELKGWPETKVVIRFWIISLILFLIGLAAIKVR</sequence>
<comment type="function">
    <text evidence="1">Catalyzes the initial step of the lipid cycle reactions in the biosynthesis of the cell wall peptidoglycan: transfers peptidoglycan precursor phospho-MurNAc-pentapeptide from UDP-MurNAc-pentapeptide onto the lipid carrier undecaprenyl phosphate, yielding undecaprenyl-pyrophosphoryl-MurNAc-pentapeptide, known as lipid I.</text>
</comment>
<comment type="catalytic activity">
    <reaction evidence="1">
        <text>UDP-N-acetyl-alpha-D-muramoyl-L-alanyl-gamma-D-glutamyl-meso-2,6-diaminopimeloyl-D-alanyl-D-alanine + di-trans,octa-cis-undecaprenyl phosphate = di-trans,octa-cis-undecaprenyl diphospho-N-acetyl-alpha-D-muramoyl-L-alanyl-D-glutamyl-meso-2,6-diaminopimeloyl-D-alanyl-D-alanine + UMP</text>
        <dbReference type="Rhea" id="RHEA:28386"/>
        <dbReference type="ChEBI" id="CHEBI:57865"/>
        <dbReference type="ChEBI" id="CHEBI:60392"/>
        <dbReference type="ChEBI" id="CHEBI:61386"/>
        <dbReference type="ChEBI" id="CHEBI:61387"/>
        <dbReference type="EC" id="2.7.8.13"/>
    </reaction>
</comment>
<comment type="cofactor">
    <cofactor evidence="1">
        <name>Mg(2+)</name>
        <dbReference type="ChEBI" id="CHEBI:18420"/>
    </cofactor>
</comment>
<comment type="pathway">
    <text evidence="1">Cell wall biogenesis; peptidoglycan biosynthesis.</text>
</comment>
<comment type="subcellular location">
    <subcellularLocation>
        <location evidence="1">Cell inner membrane</location>
        <topology evidence="1">Multi-pass membrane protein</topology>
    </subcellularLocation>
</comment>
<comment type="similarity">
    <text evidence="1">Belongs to the glycosyltransferase 4 family. MraY subfamily.</text>
</comment>
<proteinExistence type="inferred from homology"/>
<keyword id="KW-0131">Cell cycle</keyword>
<keyword id="KW-0132">Cell division</keyword>
<keyword id="KW-0997">Cell inner membrane</keyword>
<keyword id="KW-1003">Cell membrane</keyword>
<keyword id="KW-0133">Cell shape</keyword>
<keyword id="KW-0961">Cell wall biogenesis/degradation</keyword>
<keyword id="KW-0460">Magnesium</keyword>
<keyword id="KW-0472">Membrane</keyword>
<keyword id="KW-0479">Metal-binding</keyword>
<keyword id="KW-0573">Peptidoglycan synthesis</keyword>
<keyword id="KW-0808">Transferase</keyword>
<keyword id="KW-0812">Transmembrane</keyword>
<keyword id="KW-1133">Transmembrane helix</keyword>
<organism>
    <name type="scientific">Francisella tularensis subsp. tularensis (strain FSC 198)</name>
    <dbReference type="NCBI Taxonomy" id="393115"/>
    <lineage>
        <taxon>Bacteria</taxon>
        <taxon>Pseudomonadati</taxon>
        <taxon>Pseudomonadota</taxon>
        <taxon>Gammaproteobacteria</taxon>
        <taxon>Thiotrichales</taxon>
        <taxon>Francisellaceae</taxon>
        <taxon>Francisella</taxon>
    </lineage>
</organism>